<keyword id="KW-0046">Antibiotic resistance</keyword>
<keyword id="KW-0378">Hydrolase</keyword>
<keyword id="KW-0441">Lipid A biosynthesis</keyword>
<keyword id="KW-0444">Lipid biosynthesis</keyword>
<keyword id="KW-0443">Lipid metabolism</keyword>
<keyword id="KW-0448">Lipopolysaccharide biosynthesis</keyword>
<protein>
    <recommendedName>
        <fullName evidence="1">Probable 4-deoxy-4-formamido-L-arabinose-phosphoundecaprenol deformylase ArnD</fullName>
        <ecNumber evidence="1">3.5.1.n3</ecNumber>
    </recommendedName>
</protein>
<feature type="chain" id="PRO_0000383513" description="Probable 4-deoxy-4-formamido-L-arabinose-phosphoundecaprenol deformylase ArnD">
    <location>
        <begin position="1"/>
        <end position="296"/>
    </location>
</feature>
<feature type="domain" description="NodB homology" evidence="1">
    <location>
        <begin position="2"/>
        <end position="260"/>
    </location>
</feature>
<organism>
    <name type="scientific">Escherichia coli O9:H4 (strain HS)</name>
    <dbReference type="NCBI Taxonomy" id="331112"/>
    <lineage>
        <taxon>Bacteria</taxon>
        <taxon>Pseudomonadati</taxon>
        <taxon>Pseudomonadota</taxon>
        <taxon>Gammaproteobacteria</taxon>
        <taxon>Enterobacterales</taxon>
        <taxon>Enterobacteriaceae</taxon>
        <taxon>Escherichia</taxon>
    </lineage>
</organism>
<evidence type="ECO:0000255" key="1">
    <source>
        <dbReference type="HAMAP-Rule" id="MF_01870"/>
    </source>
</evidence>
<sequence length="296" mass="33112">MTKVGLRIDVDTFRGTREGVPRLLEILSKHNIQASIFFSVGPDNMGRHLWRLVKPQFLWKMLRSNAASLYGWDILLAGTAWPGKEIGHANADIIREAAKHHEVGLHAWDHHAWQARSGNWDRQTMIDDIARGLRTLEEIIGQPVTCSAAAGWRADQKVIEAKEAFHLRYNSDCRGAMPFRPLLESGNPGTAQIPVTLPTWDEVIGRDVKAEDFNGWLLNRILRDKGTPVYTIHAEVEGCAYQHNFVDLLKRAAQEGVTFCPLSELLSETLPLGQVVRGNIAGREGWLGCQQIAGSR</sequence>
<gene>
    <name evidence="1" type="primary">arnD</name>
    <name type="ordered locus">EcHS_A2401</name>
</gene>
<name>ARND_ECOHS</name>
<proteinExistence type="inferred from homology"/>
<comment type="function">
    <text evidence="1">Catalyzes the deformylation of 4-deoxy-4-formamido-L-arabinose-phosphoundecaprenol to 4-amino-4-deoxy-L-arabinose-phosphoundecaprenol. The modified arabinose is attached to lipid A and is required for resistance to polymyxin and cationic antimicrobial peptides.</text>
</comment>
<comment type="catalytic activity">
    <reaction evidence="1">
        <text>4-deoxy-4-formamido-alpha-L-arabinopyranosyl di-trans,octa-cis-undecaprenyl phosphate + H2O = 4-amino-4-deoxy-alpha-L-arabinopyranosyl di-trans,octa-cis-undecaprenyl phosphate + formate</text>
        <dbReference type="Rhea" id="RHEA:27734"/>
        <dbReference type="ChEBI" id="CHEBI:15377"/>
        <dbReference type="ChEBI" id="CHEBI:15740"/>
        <dbReference type="ChEBI" id="CHEBI:58909"/>
        <dbReference type="ChEBI" id="CHEBI:60463"/>
        <dbReference type="EC" id="3.5.1.n3"/>
    </reaction>
</comment>
<comment type="pathway">
    <text evidence="1">Glycolipid biosynthesis; 4-amino-4-deoxy-alpha-L-arabinose undecaprenyl phosphate biosynthesis; 4-amino-4-deoxy-alpha-L-arabinose undecaprenyl phosphate from UDP-4-deoxy-4-formamido-beta-L-arabinose and undecaprenyl phosphate: step 2/2.</text>
</comment>
<comment type="pathway">
    <text evidence="1">Bacterial outer membrane biogenesis; lipopolysaccharide biosynthesis.</text>
</comment>
<comment type="similarity">
    <text evidence="1">Belongs to the polysaccharide deacetylase family. ArnD deformylase subfamily.</text>
</comment>
<dbReference type="EC" id="3.5.1.n3" evidence="1"/>
<dbReference type="EMBL" id="CP000802">
    <property type="protein sequence ID" value="ABV06677.1"/>
    <property type="molecule type" value="Genomic_DNA"/>
</dbReference>
<dbReference type="RefSeq" id="WP_000169728.1">
    <property type="nucleotide sequence ID" value="NC_009800.1"/>
</dbReference>
<dbReference type="SMR" id="A8A2C3"/>
<dbReference type="GeneID" id="93774918"/>
<dbReference type="KEGG" id="ecx:EcHS_A2401"/>
<dbReference type="HOGENOM" id="CLU_084199_0_0_6"/>
<dbReference type="UniPathway" id="UPA00030"/>
<dbReference type="UniPathway" id="UPA00036">
    <property type="reaction ID" value="UER00496"/>
</dbReference>
<dbReference type="GO" id="GO:0016020">
    <property type="term" value="C:membrane"/>
    <property type="evidence" value="ECO:0007669"/>
    <property type="project" value="GOC"/>
</dbReference>
<dbReference type="GO" id="GO:0016811">
    <property type="term" value="F:hydrolase activity, acting on carbon-nitrogen (but not peptide) bonds, in linear amides"/>
    <property type="evidence" value="ECO:0007669"/>
    <property type="project" value="UniProtKB-UniRule"/>
</dbReference>
<dbReference type="GO" id="GO:0036108">
    <property type="term" value="P:4-amino-4-deoxy-alpha-L-arabinopyranosyl undecaprenyl phosphate biosynthetic process"/>
    <property type="evidence" value="ECO:0007669"/>
    <property type="project" value="UniProtKB-UniRule"/>
</dbReference>
<dbReference type="GO" id="GO:0009245">
    <property type="term" value="P:lipid A biosynthetic process"/>
    <property type="evidence" value="ECO:0007669"/>
    <property type="project" value="UniProtKB-UniRule"/>
</dbReference>
<dbReference type="GO" id="GO:0009103">
    <property type="term" value="P:lipopolysaccharide biosynthetic process"/>
    <property type="evidence" value="ECO:0007669"/>
    <property type="project" value="UniProtKB-UniRule"/>
</dbReference>
<dbReference type="GO" id="GO:0046677">
    <property type="term" value="P:response to antibiotic"/>
    <property type="evidence" value="ECO:0007669"/>
    <property type="project" value="UniProtKB-KW"/>
</dbReference>
<dbReference type="CDD" id="cd10939">
    <property type="entry name" value="CE4_ArnD"/>
    <property type="match status" value="1"/>
</dbReference>
<dbReference type="Gene3D" id="3.20.20.370">
    <property type="entry name" value="Glycoside hydrolase/deacetylase"/>
    <property type="match status" value="1"/>
</dbReference>
<dbReference type="HAMAP" id="MF_01870">
    <property type="entry name" value="ArnD"/>
    <property type="match status" value="1"/>
</dbReference>
<dbReference type="InterPro" id="IPR023557">
    <property type="entry name" value="ArnD"/>
</dbReference>
<dbReference type="InterPro" id="IPR011330">
    <property type="entry name" value="Glyco_hydro/deAcase_b/a-brl"/>
</dbReference>
<dbReference type="InterPro" id="IPR002509">
    <property type="entry name" value="NODB_dom"/>
</dbReference>
<dbReference type="InterPro" id="IPR050248">
    <property type="entry name" value="Polysacc_deacetylase_ArnD"/>
</dbReference>
<dbReference type="NCBIfam" id="NF011923">
    <property type="entry name" value="PRK15394.1"/>
    <property type="match status" value="1"/>
</dbReference>
<dbReference type="PANTHER" id="PTHR10587:SF137">
    <property type="entry name" value="4-DEOXY-4-FORMAMIDO-L-ARABINOSE-PHOSPHOUNDECAPRENOL DEFORMYLASE ARND-RELATED"/>
    <property type="match status" value="1"/>
</dbReference>
<dbReference type="PANTHER" id="PTHR10587">
    <property type="entry name" value="GLYCOSYL TRANSFERASE-RELATED"/>
    <property type="match status" value="1"/>
</dbReference>
<dbReference type="Pfam" id="PF01522">
    <property type="entry name" value="Polysacc_deac_1"/>
    <property type="match status" value="1"/>
</dbReference>
<dbReference type="SUPFAM" id="SSF88713">
    <property type="entry name" value="Glycoside hydrolase/deacetylase"/>
    <property type="match status" value="1"/>
</dbReference>
<dbReference type="PROSITE" id="PS51677">
    <property type="entry name" value="NODB"/>
    <property type="match status" value="1"/>
</dbReference>
<reference key="1">
    <citation type="journal article" date="2008" name="J. Bacteriol.">
        <title>The pangenome structure of Escherichia coli: comparative genomic analysis of E. coli commensal and pathogenic isolates.</title>
        <authorList>
            <person name="Rasko D.A."/>
            <person name="Rosovitz M.J."/>
            <person name="Myers G.S.A."/>
            <person name="Mongodin E.F."/>
            <person name="Fricke W.F."/>
            <person name="Gajer P."/>
            <person name="Crabtree J."/>
            <person name="Sebaihia M."/>
            <person name="Thomson N.R."/>
            <person name="Chaudhuri R."/>
            <person name="Henderson I.R."/>
            <person name="Sperandio V."/>
            <person name="Ravel J."/>
        </authorList>
    </citation>
    <scope>NUCLEOTIDE SEQUENCE [LARGE SCALE GENOMIC DNA]</scope>
    <source>
        <strain>HS</strain>
    </source>
</reference>
<accession>A8A2C3</accession>